<protein>
    <recommendedName>
        <fullName evidence="4 5">Preprofallaxidin-9</fullName>
    </recommendedName>
    <component>
        <recommendedName>
            <fullName>Fallaxidin-2.1</fullName>
        </recommendedName>
    </component>
    <component>
        <recommendedName>
            <fullName>Fallaxidin-3.2</fullName>
        </recommendedName>
    </component>
</protein>
<proteinExistence type="evidence at protein level"/>
<comment type="function">
    <text evidence="3">Fallaxidin-1.3 shows no antibacterial activity against Gram-positive or Gram-negative bacteria. Does not inhibit the formation of NO by neuronal nitric oxide synthase. Has no effect on splenocyte proliferation or smooth muscle contraction.</text>
</comment>
<comment type="function">
    <text evidence="3">Fallaxidin-3.2 shows antibacterial activity against the Gram-positive bacteria E.faecalis (MIC=100 uM) and L.lactis (MIC=500 uM). No antibacterial activity against the Gram-positive bacteria B.cereus, L.innocua, M.luteus, S.epidermidis, S.uberis and S.aureus, or the Gram-negative bacteria E.cloacae and E.coli.</text>
</comment>
<comment type="subcellular location">
    <subcellularLocation>
        <location evidence="3">Secreted</location>
    </subcellularLocation>
</comment>
<comment type="tissue specificity">
    <text evidence="3">Expressed by the skin glands.</text>
</comment>
<comment type="mass spectrometry">
    <molecule>Fallaxidin-3.2</molecule>
    <text>The measured mass is that of Fallaxidin-3.2.</text>
</comment>
<comment type="mass spectrometry">
    <molecule>Fallaxidin-2.1</molecule>
    <text>The measured mass is that of Fallaxidin-2.1.</text>
</comment>
<comment type="similarity">
    <text evidence="1">Belongs to the frog skin active peptide (FSAP) family. Brevinin subfamily.</text>
</comment>
<sequence>MASLKKSLFLVLFLGLVSLSICEEEKRENEEDAEDENHEEESEEKRGLLDFAKHVIGIASKLGKRSEEKRFWPFMGKRSEEKRFWPFMGKRSEE</sequence>
<name>FALX9_LITFA</name>
<evidence type="ECO:0000255" key="1"/>
<evidence type="ECO:0000256" key="2">
    <source>
        <dbReference type="SAM" id="MobiDB-lite"/>
    </source>
</evidence>
<evidence type="ECO:0000269" key="3">
    <source>
    </source>
</evidence>
<evidence type="ECO:0000303" key="4">
    <source>
    </source>
</evidence>
<evidence type="ECO:0000312" key="5">
    <source>
        <dbReference type="EMBL" id="ACH53454.1"/>
    </source>
</evidence>
<accession>B5LUR1</accession>
<reference evidence="5" key="1">
    <citation type="journal article" date="2008" name="Rapid Commun. Mass Spectrom.">
        <title>The fallaxidin peptides from the skin secretion of the eastern dwarf tree frog Litoria fallax. Sequence determination by positive and negative ion electrospray mass spectrometry: antimicrobial activity and cDNA cloning of the fallaxidins.</title>
        <authorList>
            <person name="Jackway R.J."/>
            <person name="Bowie J.H."/>
            <person name="Bilusich D."/>
            <person name="Musgrave I.F."/>
            <person name="Surinya-Johnson K.H."/>
            <person name="Tyler M.J."/>
            <person name="Eichinger P.C.H."/>
        </authorList>
    </citation>
    <scope>NUCLEOTIDE SEQUENCE [MRNA]</scope>
    <scope>PROTEIN SEQUENCE OF 47-62; 71-75 AND 84-88</scope>
    <scope>FUNCTION</scope>
    <scope>SUBCELLULAR LOCATION</scope>
    <scope>TISSUE SPECIFICITY</scope>
    <scope>MASS SPECTROMETRY</scope>
    <scope>AMIDATION AT LEU-62; MET-75 AND MET-88</scope>
    <source>
        <tissue evidence="5">Skin</tissue>
        <tissue evidence="3">Skin secretion</tissue>
    </source>
</reference>
<feature type="signal peptide" evidence="1 5">
    <location>
        <begin position="1"/>
        <end position="22"/>
    </location>
</feature>
<feature type="propeptide" id="PRO_0000361751" evidence="3">
    <location>
        <begin position="23"/>
        <end position="46"/>
    </location>
</feature>
<feature type="peptide" id="PRO_0000361752" description="Fallaxidin-3.2">
    <location>
        <begin position="47"/>
        <end position="62"/>
    </location>
</feature>
<feature type="propeptide" id="PRO_0000361753" evidence="3">
    <location>
        <begin position="66"/>
        <end position="70"/>
    </location>
</feature>
<feature type="peptide" id="PRO_0000361754" description="Fallaxidin-2.1">
    <location>
        <begin position="71"/>
        <end position="75"/>
    </location>
</feature>
<feature type="propeptide" id="PRO_0000361755" evidence="3">
    <location>
        <begin position="79"/>
        <end position="83"/>
    </location>
</feature>
<feature type="peptide" id="PRO_0000361756" description="Fallaxidin-2.1">
    <location>
        <begin position="84"/>
        <end position="88"/>
    </location>
</feature>
<feature type="propeptide" id="PRO_0000361757" evidence="3">
    <location>
        <begin position="92"/>
        <end position="94"/>
    </location>
</feature>
<feature type="region of interest" description="Disordered" evidence="2">
    <location>
        <begin position="27"/>
        <end position="46"/>
    </location>
</feature>
<feature type="compositionally biased region" description="Acidic residues" evidence="2">
    <location>
        <begin position="30"/>
        <end position="42"/>
    </location>
</feature>
<feature type="modified residue" description="Leucine amide" evidence="3">
    <location>
        <position position="62"/>
    </location>
</feature>
<feature type="modified residue" description="Methionine amide" evidence="3">
    <location>
        <position position="75"/>
    </location>
</feature>
<feature type="modified residue" description="Methionine amide" evidence="3">
    <location>
        <position position="88"/>
    </location>
</feature>
<organism>
    <name type="scientific">Litoria fallax</name>
    <name type="common">Eastern dwarf tree frog</name>
    <name type="synonym">Hylomantis fallax</name>
    <dbReference type="NCBI Taxonomy" id="115422"/>
    <lineage>
        <taxon>Eukaryota</taxon>
        <taxon>Metazoa</taxon>
        <taxon>Chordata</taxon>
        <taxon>Craniata</taxon>
        <taxon>Vertebrata</taxon>
        <taxon>Euteleostomi</taxon>
        <taxon>Amphibia</taxon>
        <taxon>Batrachia</taxon>
        <taxon>Anura</taxon>
        <taxon>Neobatrachia</taxon>
        <taxon>Hyloidea</taxon>
        <taxon>Hylidae</taxon>
        <taxon>Pelodryadinae</taxon>
        <taxon>Litoria</taxon>
    </lineage>
</organism>
<keyword id="KW-0027">Amidation</keyword>
<keyword id="KW-0878">Amphibian defense peptide</keyword>
<keyword id="KW-0044">Antibiotic</keyword>
<keyword id="KW-0929">Antimicrobial</keyword>
<keyword id="KW-0903">Direct protein sequencing</keyword>
<keyword id="KW-0964">Secreted</keyword>
<keyword id="KW-0732">Signal</keyword>
<dbReference type="EMBL" id="EU912536">
    <property type="protein sequence ID" value="ACH53454.1"/>
    <property type="molecule type" value="mRNA"/>
</dbReference>
<dbReference type="GO" id="GO:0005576">
    <property type="term" value="C:extracellular region"/>
    <property type="evidence" value="ECO:0000314"/>
    <property type="project" value="UniProtKB"/>
</dbReference>
<dbReference type="GO" id="GO:0050830">
    <property type="term" value="P:defense response to Gram-positive bacterium"/>
    <property type="evidence" value="ECO:0000314"/>
    <property type="project" value="UniProtKB"/>
</dbReference>
<dbReference type="InterPro" id="IPR004275">
    <property type="entry name" value="Frog_antimicrobial_propeptide"/>
</dbReference>
<dbReference type="Pfam" id="PF03032">
    <property type="entry name" value="FSAP_sig_propep"/>
    <property type="match status" value="1"/>
</dbReference>